<name>RNPH_METS4</name>
<sequence>MRPSKRAPDELRKVTLEKGVARYAEGSCLVTFGETKVLCTASLEERGPPWLRGSGKGWVTAEYAMLPRATHERNRREVTAGKPSGRTQEIQRLIGRSLRAVVNLPAIGERQIVVDCDVLQADGGTRTASITGAWVALHECFTWMRGRSIISVDPMRDHVAAISCGIHKGIPILDLDYDEDSAADTDANFVITGSGGIVEVQGTAEIAPFSEEQFLGLLRLAKAGVAQLVALQKQAVG</sequence>
<accession>B0UP55</accession>
<reference key="1">
    <citation type="submission" date="2008-02" db="EMBL/GenBank/DDBJ databases">
        <title>Complete sequence of chromosome of Methylobacterium sp. 4-46.</title>
        <authorList>
            <consortium name="US DOE Joint Genome Institute"/>
            <person name="Copeland A."/>
            <person name="Lucas S."/>
            <person name="Lapidus A."/>
            <person name="Glavina del Rio T."/>
            <person name="Dalin E."/>
            <person name="Tice H."/>
            <person name="Bruce D."/>
            <person name="Goodwin L."/>
            <person name="Pitluck S."/>
            <person name="Chertkov O."/>
            <person name="Brettin T."/>
            <person name="Detter J.C."/>
            <person name="Han C."/>
            <person name="Kuske C.R."/>
            <person name="Schmutz J."/>
            <person name="Larimer F."/>
            <person name="Land M."/>
            <person name="Hauser L."/>
            <person name="Kyrpides N."/>
            <person name="Ivanova N."/>
            <person name="Marx C.J."/>
            <person name="Richardson P."/>
        </authorList>
    </citation>
    <scope>NUCLEOTIDE SEQUENCE [LARGE SCALE GENOMIC DNA]</scope>
    <source>
        <strain>4-46</strain>
    </source>
</reference>
<gene>
    <name evidence="1" type="primary">rph</name>
    <name type="ordered locus">M446_4253</name>
</gene>
<organism>
    <name type="scientific">Methylobacterium sp. (strain 4-46)</name>
    <dbReference type="NCBI Taxonomy" id="426117"/>
    <lineage>
        <taxon>Bacteria</taxon>
        <taxon>Pseudomonadati</taxon>
        <taxon>Pseudomonadota</taxon>
        <taxon>Alphaproteobacteria</taxon>
        <taxon>Hyphomicrobiales</taxon>
        <taxon>Methylobacteriaceae</taxon>
        <taxon>Methylobacterium</taxon>
    </lineage>
</organism>
<feature type="chain" id="PRO_1000129352" description="Ribonuclease PH">
    <location>
        <begin position="1"/>
        <end position="237"/>
    </location>
</feature>
<feature type="binding site" evidence="1">
    <location>
        <position position="86"/>
    </location>
    <ligand>
        <name>phosphate</name>
        <dbReference type="ChEBI" id="CHEBI:43474"/>
        <note>substrate</note>
    </ligand>
</feature>
<feature type="binding site" evidence="1">
    <location>
        <begin position="124"/>
        <end position="126"/>
    </location>
    <ligand>
        <name>phosphate</name>
        <dbReference type="ChEBI" id="CHEBI:43474"/>
        <note>substrate</note>
    </ligand>
</feature>
<comment type="function">
    <text evidence="1">Phosphorolytic 3'-5' exoribonuclease that plays an important role in tRNA 3'-end maturation. Removes nucleotide residues following the 3'-CCA terminus of tRNAs; can also add nucleotides to the ends of RNA molecules by using nucleoside diphosphates as substrates, but this may not be physiologically important. Probably plays a role in initiation of 16S rRNA degradation (leading to ribosome degradation) during starvation.</text>
</comment>
<comment type="catalytic activity">
    <reaction evidence="1">
        <text>tRNA(n+1) + phosphate = tRNA(n) + a ribonucleoside 5'-diphosphate</text>
        <dbReference type="Rhea" id="RHEA:10628"/>
        <dbReference type="Rhea" id="RHEA-COMP:17343"/>
        <dbReference type="Rhea" id="RHEA-COMP:17344"/>
        <dbReference type="ChEBI" id="CHEBI:43474"/>
        <dbReference type="ChEBI" id="CHEBI:57930"/>
        <dbReference type="ChEBI" id="CHEBI:173114"/>
        <dbReference type="EC" id="2.7.7.56"/>
    </reaction>
</comment>
<comment type="subunit">
    <text evidence="1">Homohexameric ring arranged as a trimer of dimers.</text>
</comment>
<comment type="similarity">
    <text evidence="1">Belongs to the RNase PH family.</text>
</comment>
<keyword id="KW-0548">Nucleotidyltransferase</keyword>
<keyword id="KW-0694">RNA-binding</keyword>
<keyword id="KW-0698">rRNA processing</keyword>
<keyword id="KW-0808">Transferase</keyword>
<keyword id="KW-0819">tRNA processing</keyword>
<keyword id="KW-0820">tRNA-binding</keyword>
<dbReference type="EC" id="2.7.7.56" evidence="1"/>
<dbReference type="EMBL" id="CP000943">
    <property type="protein sequence ID" value="ACA18602.1"/>
    <property type="molecule type" value="Genomic_DNA"/>
</dbReference>
<dbReference type="RefSeq" id="WP_012333993.1">
    <property type="nucleotide sequence ID" value="NC_010511.1"/>
</dbReference>
<dbReference type="SMR" id="B0UP55"/>
<dbReference type="STRING" id="426117.M446_4253"/>
<dbReference type="KEGG" id="met:M446_4253"/>
<dbReference type="eggNOG" id="COG0689">
    <property type="taxonomic scope" value="Bacteria"/>
</dbReference>
<dbReference type="HOGENOM" id="CLU_050858_0_0_5"/>
<dbReference type="GO" id="GO:0000175">
    <property type="term" value="F:3'-5'-RNA exonuclease activity"/>
    <property type="evidence" value="ECO:0007669"/>
    <property type="project" value="UniProtKB-UniRule"/>
</dbReference>
<dbReference type="GO" id="GO:0000049">
    <property type="term" value="F:tRNA binding"/>
    <property type="evidence" value="ECO:0007669"/>
    <property type="project" value="UniProtKB-UniRule"/>
</dbReference>
<dbReference type="GO" id="GO:0009022">
    <property type="term" value="F:tRNA nucleotidyltransferase activity"/>
    <property type="evidence" value="ECO:0007669"/>
    <property type="project" value="UniProtKB-UniRule"/>
</dbReference>
<dbReference type="GO" id="GO:0016075">
    <property type="term" value="P:rRNA catabolic process"/>
    <property type="evidence" value="ECO:0007669"/>
    <property type="project" value="UniProtKB-UniRule"/>
</dbReference>
<dbReference type="GO" id="GO:0006364">
    <property type="term" value="P:rRNA processing"/>
    <property type="evidence" value="ECO:0007669"/>
    <property type="project" value="UniProtKB-KW"/>
</dbReference>
<dbReference type="GO" id="GO:0008033">
    <property type="term" value="P:tRNA processing"/>
    <property type="evidence" value="ECO:0007669"/>
    <property type="project" value="UniProtKB-UniRule"/>
</dbReference>
<dbReference type="CDD" id="cd11362">
    <property type="entry name" value="RNase_PH_bact"/>
    <property type="match status" value="1"/>
</dbReference>
<dbReference type="FunFam" id="3.30.230.70:FF:000003">
    <property type="entry name" value="Ribonuclease PH"/>
    <property type="match status" value="1"/>
</dbReference>
<dbReference type="Gene3D" id="3.30.230.70">
    <property type="entry name" value="GHMP Kinase, N-terminal domain"/>
    <property type="match status" value="1"/>
</dbReference>
<dbReference type="HAMAP" id="MF_00564">
    <property type="entry name" value="RNase_PH"/>
    <property type="match status" value="1"/>
</dbReference>
<dbReference type="InterPro" id="IPR001247">
    <property type="entry name" value="ExoRNase_PH_dom1"/>
</dbReference>
<dbReference type="InterPro" id="IPR015847">
    <property type="entry name" value="ExoRNase_PH_dom2"/>
</dbReference>
<dbReference type="InterPro" id="IPR036345">
    <property type="entry name" value="ExoRNase_PH_dom2_sf"/>
</dbReference>
<dbReference type="InterPro" id="IPR027408">
    <property type="entry name" value="PNPase/RNase_PH_dom_sf"/>
</dbReference>
<dbReference type="InterPro" id="IPR020568">
    <property type="entry name" value="Ribosomal_Su5_D2-typ_SF"/>
</dbReference>
<dbReference type="InterPro" id="IPR050080">
    <property type="entry name" value="RNase_PH"/>
</dbReference>
<dbReference type="InterPro" id="IPR002381">
    <property type="entry name" value="RNase_PH_bac-type"/>
</dbReference>
<dbReference type="InterPro" id="IPR018336">
    <property type="entry name" value="RNase_PH_CS"/>
</dbReference>
<dbReference type="NCBIfam" id="TIGR01966">
    <property type="entry name" value="RNasePH"/>
    <property type="match status" value="1"/>
</dbReference>
<dbReference type="PANTHER" id="PTHR11953">
    <property type="entry name" value="EXOSOME COMPLEX COMPONENT"/>
    <property type="match status" value="1"/>
</dbReference>
<dbReference type="PANTHER" id="PTHR11953:SF0">
    <property type="entry name" value="EXOSOME COMPLEX COMPONENT RRP41"/>
    <property type="match status" value="1"/>
</dbReference>
<dbReference type="Pfam" id="PF01138">
    <property type="entry name" value="RNase_PH"/>
    <property type="match status" value="1"/>
</dbReference>
<dbReference type="Pfam" id="PF03725">
    <property type="entry name" value="RNase_PH_C"/>
    <property type="match status" value="1"/>
</dbReference>
<dbReference type="SUPFAM" id="SSF55666">
    <property type="entry name" value="Ribonuclease PH domain 2-like"/>
    <property type="match status" value="1"/>
</dbReference>
<dbReference type="SUPFAM" id="SSF54211">
    <property type="entry name" value="Ribosomal protein S5 domain 2-like"/>
    <property type="match status" value="1"/>
</dbReference>
<dbReference type="PROSITE" id="PS01277">
    <property type="entry name" value="RIBONUCLEASE_PH"/>
    <property type="match status" value="1"/>
</dbReference>
<protein>
    <recommendedName>
        <fullName evidence="1">Ribonuclease PH</fullName>
        <shortName evidence="1">RNase PH</shortName>
        <ecNumber evidence="1">2.7.7.56</ecNumber>
    </recommendedName>
    <alternativeName>
        <fullName evidence="1">tRNA nucleotidyltransferase</fullName>
    </alternativeName>
</protein>
<evidence type="ECO:0000255" key="1">
    <source>
        <dbReference type="HAMAP-Rule" id="MF_00564"/>
    </source>
</evidence>
<proteinExistence type="inferred from homology"/>